<organism>
    <name type="scientific">Pyrobaculum aerophilum (strain ATCC 51768 / DSM 7523 / JCM 9630 / CIP 104966 / NBRC 100827 / IM2)</name>
    <dbReference type="NCBI Taxonomy" id="178306"/>
    <lineage>
        <taxon>Archaea</taxon>
        <taxon>Thermoproteota</taxon>
        <taxon>Thermoprotei</taxon>
        <taxon>Thermoproteales</taxon>
        <taxon>Thermoproteaceae</taxon>
        <taxon>Pyrobaculum</taxon>
    </lineage>
</organism>
<proteinExistence type="inferred from homology"/>
<dbReference type="EMBL" id="AE009441">
    <property type="protein sequence ID" value="AAL64026.1"/>
    <property type="molecule type" value="Genomic_DNA"/>
</dbReference>
<dbReference type="RefSeq" id="WP_011008494.1">
    <property type="nucleotide sequence ID" value="NC_003364.1"/>
</dbReference>
<dbReference type="SMR" id="Q8ZVN0"/>
<dbReference type="FunCoup" id="Q8ZVN0">
    <property type="interactions" value="169"/>
</dbReference>
<dbReference type="STRING" id="178306.PAE2206"/>
<dbReference type="EnsemblBacteria" id="AAL64026">
    <property type="protein sequence ID" value="AAL64026"/>
    <property type="gene ID" value="PAE2206"/>
</dbReference>
<dbReference type="GeneID" id="1464360"/>
<dbReference type="KEGG" id="pai:PAE2206"/>
<dbReference type="PATRIC" id="fig|178306.9.peg.1638"/>
<dbReference type="eggNOG" id="arCOG01574">
    <property type="taxonomic scope" value="Archaea"/>
</dbReference>
<dbReference type="HOGENOM" id="CLU_038194_0_0_2"/>
<dbReference type="InParanoid" id="Q8ZVN0"/>
<dbReference type="Proteomes" id="UP000002439">
    <property type="component" value="Chromosome"/>
</dbReference>
<dbReference type="GO" id="GO:0000177">
    <property type="term" value="C:cytoplasmic exosome (RNase complex)"/>
    <property type="evidence" value="ECO:0000318"/>
    <property type="project" value="GO_Central"/>
</dbReference>
<dbReference type="GO" id="GO:0035925">
    <property type="term" value="F:mRNA 3'-UTR AU-rich region binding"/>
    <property type="evidence" value="ECO:0000318"/>
    <property type="project" value="GO_Central"/>
</dbReference>
<dbReference type="GO" id="GO:0016075">
    <property type="term" value="P:rRNA catabolic process"/>
    <property type="evidence" value="ECO:0000318"/>
    <property type="project" value="GO_Central"/>
</dbReference>
<dbReference type="CDD" id="cd11365">
    <property type="entry name" value="RNase_PH_archRRP42"/>
    <property type="match status" value="1"/>
</dbReference>
<dbReference type="FunFam" id="3.30.230.70:FF:000017">
    <property type="entry name" value="Exosome complex component Rrp42"/>
    <property type="match status" value="1"/>
</dbReference>
<dbReference type="Gene3D" id="3.30.230.70">
    <property type="entry name" value="GHMP Kinase, N-terminal domain"/>
    <property type="match status" value="1"/>
</dbReference>
<dbReference type="HAMAP" id="MF_00622">
    <property type="entry name" value="Exosome_Rrp42"/>
    <property type="match status" value="1"/>
</dbReference>
<dbReference type="InterPro" id="IPR001247">
    <property type="entry name" value="ExoRNase_PH_dom1"/>
</dbReference>
<dbReference type="InterPro" id="IPR015847">
    <property type="entry name" value="ExoRNase_PH_dom2"/>
</dbReference>
<dbReference type="InterPro" id="IPR036345">
    <property type="entry name" value="ExoRNase_PH_dom2_sf"/>
</dbReference>
<dbReference type="InterPro" id="IPR050590">
    <property type="entry name" value="Exosome_comp_Rrp42_subfam"/>
</dbReference>
<dbReference type="InterPro" id="IPR027408">
    <property type="entry name" value="PNPase/RNase_PH_dom_sf"/>
</dbReference>
<dbReference type="InterPro" id="IPR020568">
    <property type="entry name" value="Ribosomal_Su5_D2-typ_SF"/>
</dbReference>
<dbReference type="InterPro" id="IPR020869">
    <property type="entry name" value="Rrp42_archaea"/>
</dbReference>
<dbReference type="NCBIfam" id="NF003282">
    <property type="entry name" value="PRK04282.1-1"/>
    <property type="match status" value="1"/>
</dbReference>
<dbReference type="PANTHER" id="PTHR11097:SF8">
    <property type="entry name" value="EXOSOME COMPLEX COMPONENT RRP42"/>
    <property type="match status" value="1"/>
</dbReference>
<dbReference type="PANTHER" id="PTHR11097">
    <property type="entry name" value="EXOSOME COMPLEX EXONUCLEASE RIBOSOMAL RNA PROCESSING PROTEIN"/>
    <property type="match status" value="1"/>
</dbReference>
<dbReference type="Pfam" id="PF01138">
    <property type="entry name" value="RNase_PH"/>
    <property type="match status" value="1"/>
</dbReference>
<dbReference type="Pfam" id="PF03725">
    <property type="entry name" value="RNase_PH_C"/>
    <property type="match status" value="1"/>
</dbReference>
<dbReference type="SUPFAM" id="SSF55666">
    <property type="entry name" value="Ribonuclease PH domain 2-like"/>
    <property type="match status" value="1"/>
</dbReference>
<dbReference type="SUPFAM" id="SSF54211">
    <property type="entry name" value="Ribosomal protein S5 domain 2-like"/>
    <property type="match status" value="1"/>
</dbReference>
<protein>
    <recommendedName>
        <fullName evidence="1">Exosome complex component Rrp42</fullName>
    </recommendedName>
</protein>
<gene>
    <name evidence="1" type="primary">rrp42</name>
    <name type="ordered locus">PAE2206</name>
</gene>
<feature type="chain" id="PRO_0000140002" description="Exosome complex component Rrp42">
    <location>
        <begin position="1"/>
        <end position="274"/>
    </location>
</feature>
<evidence type="ECO:0000255" key="1">
    <source>
        <dbReference type="HAMAP-Rule" id="MF_00622"/>
    </source>
</evidence>
<sequence>MASISPYGKRFISYLRREQIRRLLATKYRVDGRGPEQTRNVEINVGVVKTADGSAEVKLGKTHVVAGVKVGLGQPFPDAPDEGVLVVNAEVLPHASPYTEVGPPDEFAIELARVVDRGIRHCGYVDFKKLAVEGGKAYVLWIDLYVINDDGNLIDVANLASVAALKNTQLPVVVKDEAGVVKLDRNNKAPLPVDISKAPIAVSVGKIGNVLFLDPTFEEELSLDGRITFTFSEDKIVAAQKTLGYFTQSEIEAALNLALRGRDRLLEALKSALK</sequence>
<reference key="1">
    <citation type="journal article" date="2002" name="Proc. Natl. Acad. Sci. U.S.A.">
        <title>Genome sequence of the hyperthermophilic crenarchaeon Pyrobaculum aerophilum.</title>
        <authorList>
            <person name="Fitz-Gibbon S.T."/>
            <person name="Ladner H."/>
            <person name="Kim U.-J."/>
            <person name="Stetter K.O."/>
            <person name="Simon M.I."/>
            <person name="Miller J.H."/>
        </authorList>
    </citation>
    <scope>NUCLEOTIDE SEQUENCE [LARGE SCALE GENOMIC DNA]</scope>
    <source>
        <strain>ATCC 51768 / DSM 7523 / JCM 9630 / CIP 104966 / NBRC 100827 / IM2</strain>
    </source>
</reference>
<name>RRP42_PYRAE</name>
<accession>Q8ZVN0</accession>
<comment type="function">
    <text evidence="1">Non-catalytic component of the exosome, which is a complex involved in RNA degradation. Contributes to the structuring of the Rrp41 active site.</text>
</comment>
<comment type="subunit">
    <text evidence="1">Component of the archaeal exosome complex. Forms a hexameric ring-like arrangement composed of 3 Rrp41-Rrp42 heterodimers. The hexameric ring associates with a trimer of Rrp4 and/or Csl4 subunits.</text>
</comment>
<comment type="subcellular location">
    <subcellularLocation>
        <location evidence="1">Cytoplasm</location>
    </subcellularLocation>
</comment>
<comment type="similarity">
    <text evidence="1">Belongs to the RNase PH family. Rrp42 subfamily.</text>
</comment>
<keyword id="KW-0963">Cytoplasm</keyword>
<keyword id="KW-0271">Exosome</keyword>
<keyword id="KW-1185">Reference proteome</keyword>